<sequence length="8" mass="884">SPPFAPRL</sequence>
<protein>
    <recommendedName>
        <fullName evidence="4">Pyrokinin-2</fullName>
        <shortName evidence="4">PK-2</shortName>
    </recommendedName>
    <alternativeName>
        <fullName evidence="1">FXPRL-amide</fullName>
    </alternativeName>
</protein>
<proteinExistence type="evidence at protein level"/>
<feature type="peptide" id="PRO_0000421583" description="Pyrokinin-2" evidence="3">
    <location>
        <begin position="1"/>
        <end position="8"/>
    </location>
</feature>
<feature type="modified residue" description="Leucine amide" evidence="3">
    <location>
        <position position="8"/>
    </location>
</feature>
<comment type="function">
    <text evidence="1">Myoactive.</text>
</comment>
<comment type="subcellular location">
    <subcellularLocation>
        <location evidence="6">Secreted</location>
    </subcellularLocation>
</comment>
<comment type="similarity">
    <text evidence="2">Belongs to the pyrokinin family.</text>
</comment>
<name>PPK2_AUSGA</name>
<dbReference type="GO" id="GO:0005576">
    <property type="term" value="C:extracellular region"/>
    <property type="evidence" value="ECO:0007669"/>
    <property type="project" value="UniProtKB-SubCell"/>
</dbReference>
<dbReference type="GO" id="GO:0007218">
    <property type="term" value="P:neuropeptide signaling pathway"/>
    <property type="evidence" value="ECO:0007669"/>
    <property type="project" value="UniProtKB-KW"/>
</dbReference>
<reference evidence="5" key="1">
    <citation type="journal article" date="2012" name="Syst. Biol.">
        <title>Peptidomics-based phylogeny and biogeography of Mantophasmatodea (Hexapoda).</title>
        <authorList>
            <person name="Predel R."/>
            <person name="Neupert S."/>
            <person name="Huetteroth W."/>
            <person name="Kahnt J."/>
            <person name="Waidelich D."/>
            <person name="Roth S."/>
        </authorList>
    </citation>
    <scope>PROTEIN SEQUENCE</scope>
    <scope>AMIDATION AT LEU-8</scope>
    <source>
        <tissue evidence="3">Corpora cardiaca</tissue>
    </source>
</reference>
<evidence type="ECO:0000250" key="1">
    <source>
        <dbReference type="UniProtKB" id="P82619"/>
    </source>
</evidence>
<evidence type="ECO:0000255" key="2"/>
<evidence type="ECO:0000269" key="3">
    <source>
    </source>
</evidence>
<evidence type="ECO:0000303" key="4">
    <source>
    </source>
</evidence>
<evidence type="ECO:0000305" key="5"/>
<evidence type="ECO:0000305" key="6">
    <source>
    </source>
</evidence>
<accession>B3A0F0</accession>
<keyword id="KW-0027">Amidation</keyword>
<keyword id="KW-0903">Direct protein sequencing</keyword>
<keyword id="KW-0527">Neuropeptide</keyword>
<keyword id="KW-0964">Secreted</keyword>
<organism>
    <name type="scientific">Austrophasma gansbaaiense</name>
    <name type="common">Gladiator</name>
    <name type="synonym">Heel-walker</name>
    <dbReference type="NCBI Taxonomy" id="253136"/>
    <lineage>
        <taxon>Eukaryota</taxon>
        <taxon>Metazoa</taxon>
        <taxon>Ecdysozoa</taxon>
        <taxon>Arthropoda</taxon>
        <taxon>Hexapoda</taxon>
        <taxon>Insecta</taxon>
        <taxon>Pterygota</taxon>
        <taxon>Neoptera</taxon>
        <taxon>Polyneoptera</taxon>
        <taxon>Mantophasmatodea</taxon>
        <taxon>Austrophasmatidae</taxon>
        <taxon>Austrophasma</taxon>
    </lineage>
</organism>